<feature type="chain" id="PRO_0000076008" description="D-3-phosphoglycerate dehydrogenase">
    <location>
        <begin position="1"/>
        <end position="527"/>
    </location>
</feature>
<feature type="domain" description="ACT" evidence="3">
    <location>
        <begin position="453"/>
        <end position="527"/>
    </location>
</feature>
<feature type="active site" evidence="1">
    <location>
        <position position="230"/>
    </location>
</feature>
<feature type="active site" evidence="1">
    <location>
        <position position="259"/>
    </location>
</feature>
<feature type="active site" description="Proton donor" evidence="1">
    <location>
        <position position="278"/>
    </location>
</feature>
<feature type="binding site" evidence="2">
    <location>
        <begin position="149"/>
        <end position="150"/>
    </location>
    <ligand>
        <name>NAD(+)</name>
        <dbReference type="ChEBI" id="CHEBI:57540"/>
    </ligand>
</feature>
<feature type="binding site" evidence="2">
    <location>
        <position position="169"/>
    </location>
    <ligand>
        <name>NAD(+)</name>
        <dbReference type="ChEBI" id="CHEBI:57540"/>
    </ligand>
</feature>
<feature type="binding site" evidence="2">
    <location>
        <begin position="228"/>
        <end position="230"/>
    </location>
    <ligand>
        <name>NAD(+)</name>
        <dbReference type="ChEBI" id="CHEBI:57540"/>
    </ligand>
</feature>
<feature type="binding site" evidence="2">
    <location>
        <position position="254"/>
    </location>
    <ligand>
        <name>NAD(+)</name>
        <dbReference type="ChEBI" id="CHEBI:57540"/>
    </ligand>
</feature>
<feature type="binding site" evidence="2">
    <location>
        <begin position="278"/>
        <end position="281"/>
    </location>
    <ligand>
        <name>NAD(+)</name>
        <dbReference type="ChEBI" id="CHEBI:57540"/>
    </ligand>
</feature>
<keyword id="KW-0028">Amino-acid biosynthesis</keyword>
<keyword id="KW-0520">NAD</keyword>
<keyword id="KW-0560">Oxidoreductase</keyword>
<keyword id="KW-1185">Reference proteome</keyword>
<keyword id="KW-0718">Serine biosynthesis</keyword>
<comment type="catalytic activity">
    <reaction>
        <text>(2R)-3-phosphoglycerate + NAD(+) = 3-phosphooxypyruvate + NADH + H(+)</text>
        <dbReference type="Rhea" id="RHEA:12641"/>
        <dbReference type="ChEBI" id="CHEBI:15378"/>
        <dbReference type="ChEBI" id="CHEBI:18110"/>
        <dbReference type="ChEBI" id="CHEBI:57540"/>
        <dbReference type="ChEBI" id="CHEBI:57945"/>
        <dbReference type="ChEBI" id="CHEBI:58272"/>
        <dbReference type="EC" id="1.1.1.95"/>
    </reaction>
</comment>
<comment type="pathway">
    <text>Amino-acid biosynthesis; L-serine biosynthesis; L-serine from 3-phospho-D-glycerate: step 1/3.</text>
</comment>
<comment type="similarity">
    <text evidence="4">Belongs to the D-isomer specific 2-hydroxyacid dehydrogenase family.</text>
</comment>
<name>SERA_ARCFU</name>
<evidence type="ECO:0000250" key="1"/>
<evidence type="ECO:0000250" key="2">
    <source>
        <dbReference type="UniProtKB" id="P0A9T0"/>
    </source>
</evidence>
<evidence type="ECO:0000255" key="3">
    <source>
        <dbReference type="PROSITE-ProRule" id="PRU01007"/>
    </source>
</evidence>
<evidence type="ECO:0000305" key="4"/>
<protein>
    <recommendedName>
        <fullName>D-3-phosphoglycerate dehydrogenase</fullName>
        <shortName>PGDH</shortName>
        <ecNumber>1.1.1.95</ecNumber>
    </recommendedName>
</protein>
<gene>
    <name type="primary">serA</name>
    <name type="ordered locus">AF_0813</name>
</gene>
<proteinExistence type="inferred from homology"/>
<reference key="1">
    <citation type="journal article" date="1997" name="Nature">
        <title>The complete genome sequence of the hyperthermophilic, sulphate-reducing archaeon Archaeoglobus fulgidus.</title>
        <authorList>
            <person name="Klenk H.-P."/>
            <person name="Clayton R.A."/>
            <person name="Tomb J.-F."/>
            <person name="White O."/>
            <person name="Nelson K.E."/>
            <person name="Ketchum K.A."/>
            <person name="Dodson R.J."/>
            <person name="Gwinn M.L."/>
            <person name="Hickey E.K."/>
            <person name="Peterson J.D."/>
            <person name="Richardson D.L."/>
            <person name="Kerlavage A.R."/>
            <person name="Graham D.E."/>
            <person name="Kyrpides N.C."/>
            <person name="Fleischmann R.D."/>
            <person name="Quackenbush J."/>
            <person name="Lee N.H."/>
            <person name="Sutton G.G."/>
            <person name="Gill S.R."/>
            <person name="Kirkness E.F."/>
            <person name="Dougherty B.A."/>
            <person name="McKenney K."/>
            <person name="Adams M.D."/>
            <person name="Loftus B.J."/>
            <person name="Peterson S.N."/>
            <person name="Reich C.I."/>
            <person name="McNeil L.K."/>
            <person name="Badger J.H."/>
            <person name="Glodek A."/>
            <person name="Zhou L."/>
            <person name="Overbeek R."/>
            <person name="Gocayne J.D."/>
            <person name="Weidman J.F."/>
            <person name="McDonald L.A."/>
            <person name="Utterback T.R."/>
            <person name="Cotton M.D."/>
            <person name="Spriggs T."/>
            <person name="Artiach P."/>
            <person name="Kaine B.P."/>
            <person name="Sykes S.M."/>
            <person name="Sadow P.W."/>
            <person name="D'Andrea K.P."/>
            <person name="Bowman C."/>
            <person name="Fujii C."/>
            <person name="Garland S.A."/>
            <person name="Mason T.M."/>
            <person name="Olsen G.J."/>
            <person name="Fraser C.M."/>
            <person name="Smith H.O."/>
            <person name="Woese C.R."/>
            <person name="Venter J.C."/>
        </authorList>
    </citation>
    <scope>NUCLEOTIDE SEQUENCE [LARGE SCALE GENOMIC DNA]</scope>
    <source>
        <strain>ATCC 49558 / DSM 4304 / JCM 9628 / NBRC 100126 / VC-16</strain>
    </source>
</reference>
<sequence length="527" mass="57204">MKVLVAEPISEEAIDYMRKNGLEVEVKTGMSREELIREVPKYEAIVVRSQTKVDAEVIQAAKNLKIIGRAGVGVDNIDINAATQRGIVVVNAPGGNTISTAEHAIALMLAAARKIPQADRSVKEGKWERKKFMGIELRGKTAGVIGLGRVGFEVAKRCKALEMNVLAYDPFVSKERAEQIGVKLVDFDTLLASSDVITVHVPRTKETIGLIGKGQFEKMKDGVIVVNAARGGIVDEAALYEAIKAGKVAAAALDVYEKEPPSPDNPLLKLDNVVTTPHIAASTREAQLNVGMIIAEDIVNMAKGLPVRNAVNLPSIEPSDFEFMMPFLTLAEKMGKIASVRLGGAIRKVKVTCSGKLATKNTEFVTRALLKGLFEPILSNEINLVSAKPVAVERGITIEESKVESVEHYESLLEVWVESNGKEMYLAGTCFGNEYRILKIDVYNVNFVPKGHYIISLHEDKPGVIGRVGTLFGRNNINIAGMIVGRSGDKPGGIQLMLLLVDDPPTPEVLEEMTKLDGIIDATYVEL</sequence>
<dbReference type="EC" id="1.1.1.95"/>
<dbReference type="EMBL" id="AE000782">
    <property type="protein sequence ID" value="AAB90429.1"/>
    <property type="molecule type" value="Genomic_DNA"/>
</dbReference>
<dbReference type="PIR" id="E69351">
    <property type="entry name" value="E69351"/>
</dbReference>
<dbReference type="RefSeq" id="WP_010878316.1">
    <property type="nucleotide sequence ID" value="NC_000917.1"/>
</dbReference>
<dbReference type="SMR" id="O29445"/>
<dbReference type="STRING" id="224325.AF_0813"/>
<dbReference type="PaxDb" id="224325-AF_0813"/>
<dbReference type="EnsemblBacteria" id="AAB90429">
    <property type="protein sequence ID" value="AAB90429"/>
    <property type="gene ID" value="AF_0813"/>
</dbReference>
<dbReference type="GeneID" id="1484032"/>
<dbReference type="KEGG" id="afu:AF_0813"/>
<dbReference type="eggNOG" id="arCOG01754">
    <property type="taxonomic scope" value="Archaea"/>
</dbReference>
<dbReference type="HOGENOM" id="CLU_019796_8_1_2"/>
<dbReference type="OrthoDB" id="7437at2157"/>
<dbReference type="PhylomeDB" id="O29445"/>
<dbReference type="UniPathway" id="UPA00135">
    <property type="reaction ID" value="UER00196"/>
</dbReference>
<dbReference type="Proteomes" id="UP000002199">
    <property type="component" value="Chromosome"/>
</dbReference>
<dbReference type="GO" id="GO:0051287">
    <property type="term" value="F:NAD binding"/>
    <property type="evidence" value="ECO:0007669"/>
    <property type="project" value="InterPro"/>
</dbReference>
<dbReference type="GO" id="GO:0004617">
    <property type="term" value="F:phosphoglycerate dehydrogenase activity"/>
    <property type="evidence" value="ECO:0007669"/>
    <property type="project" value="UniProtKB-EC"/>
</dbReference>
<dbReference type="GO" id="GO:0006564">
    <property type="term" value="P:L-serine biosynthetic process"/>
    <property type="evidence" value="ECO:0007669"/>
    <property type="project" value="UniProtKB-KW"/>
</dbReference>
<dbReference type="CDD" id="cd04902">
    <property type="entry name" value="ACT_3PGDH-xct"/>
    <property type="match status" value="1"/>
</dbReference>
<dbReference type="CDD" id="cd12173">
    <property type="entry name" value="PGDH_4"/>
    <property type="match status" value="1"/>
</dbReference>
<dbReference type="FunFam" id="3.30.1330.90:FF:000003">
    <property type="entry name" value="D-3-phosphoglycerate dehydrogenase"/>
    <property type="match status" value="1"/>
</dbReference>
<dbReference type="FunFam" id="3.40.50.720:FF:000021">
    <property type="entry name" value="D-3-phosphoglycerate dehydrogenase"/>
    <property type="match status" value="1"/>
</dbReference>
<dbReference type="Gene3D" id="3.30.70.260">
    <property type="match status" value="1"/>
</dbReference>
<dbReference type="Gene3D" id="3.30.1330.90">
    <property type="entry name" value="D-3-phosphoglycerate dehydrogenase, domain 3"/>
    <property type="match status" value="1"/>
</dbReference>
<dbReference type="Gene3D" id="3.40.50.720">
    <property type="entry name" value="NAD(P)-binding Rossmann-like Domain"/>
    <property type="match status" value="2"/>
</dbReference>
<dbReference type="InterPro" id="IPR045865">
    <property type="entry name" value="ACT-like_dom_sf"/>
</dbReference>
<dbReference type="InterPro" id="IPR002912">
    <property type="entry name" value="ACT_dom"/>
</dbReference>
<dbReference type="InterPro" id="IPR029009">
    <property type="entry name" value="ASB_dom_sf"/>
</dbReference>
<dbReference type="InterPro" id="IPR050857">
    <property type="entry name" value="D-2-hydroxyacid_DH"/>
</dbReference>
<dbReference type="InterPro" id="IPR006139">
    <property type="entry name" value="D-isomer_2_OHA_DH_cat_dom"/>
</dbReference>
<dbReference type="InterPro" id="IPR029753">
    <property type="entry name" value="D-isomer_DH_CS"/>
</dbReference>
<dbReference type="InterPro" id="IPR029752">
    <property type="entry name" value="D-isomer_DH_CS1"/>
</dbReference>
<dbReference type="InterPro" id="IPR006140">
    <property type="entry name" value="D-isomer_DH_NAD-bd"/>
</dbReference>
<dbReference type="InterPro" id="IPR036291">
    <property type="entry name" value="NAD(P)-bd_dom_sf"/>
</dbReference>
<dbReference type="InterPro" id="IPR006236">
    <property type="entry name" value="PGDH"/>
</dbReference>
<dbReference type="InterPro" id="IPR045626">
    <property type="entry name" value="PGDH_ASB_dom"/>
</dbReference>
<dbReference type="NCBIfam" id="TIGR01327">
    <property type="entry name" value="PGDH"/>
    <property type="match status" value="1"/>
</dbReference>
<dbReference type="PANTHER" id="PTHR42789">
    <property type="entry name" value="D-ISOMER SPECIFIC 2-HYDROXYACID DEHYDROGENASE FAMILY PROTEIN (AFU_ORTHOLOGUE AFUA_6G10090)"/>
    <property type="match status" value="1"/>
</dbReference>
<dbReference type="PANTHER" id="PTHR42789:SF1">
    <property type="entry name" value="D-ISOMER SPECIFIC 2-HYDROXYACID DEHYDROGENASE FAMILY PROTEIN (AFU_ORTHOLOGUE AFUA_6G10090)"/>
    <property type="match status" value="1"/>
</dbReference>
<dbReference type="Pfam" id="PF00389">
    <property type="entry name" value="2-Hacid_dh"/>
    <property type="match status" value="1"/>
</dbReference>
<dbReference type="Pfam" id="PF02826">
    <property type="entry name" value="2-Hacid_dh_C"/>
    <property type="match status" value="1"/>
</dbReference>
<dbReference type="Pfam" id="PF01842">
    <property type="entry name" value="ACT"/>
    <property type="match status" value="1"/>
</dbReference>
<dbReference type="Pfam" id="PF19304">
    <property type="entry name" value="PGDH_inter"/>
    <property type="match status" value="1"/>
</dbReference>
<dbReference type="SUPFAM" id="SSF55021">
    <property type="entry name" value="ACT-like"/>
    <property type="match status" value="1"/>
</dbReference>
<dbReference type="SUPFAM" id="SSF52283">
    <property type="entry name" value="Formate/glycerate dehydrogenase catalytic domain-like"/>
    <property type="match status" value="1"/>
</dbReference>
<dbReference type="SUPFAM" id="SSF51735">
    <property type="entry name" value="NAD(P)-binding Rossmann-fold domains"/>
    <property type="match status" value="1"/>
</dbReference>
<dbReference type="SUPFAM" id="SSF143548">
    <property type="entry name" value="Serine metabolism enzymes domain"/>
    <property type="match status" value="1"/>
</dbReference>
<dbReference type="PROSITE" id="PS51671">
    <property type="entry name" value="ACT"/>
    <property type="match status" value="1"/>
</dbReference>
<dbReference type="PROSITE" id="PS00065">
    <property type="entry name" value="D_2_HYDROXYACID_DH_1"/>
    <property type="match status" value="1"/>
</dbReference>
<dbReference type="PROSITE" id="PS00670">
    <property type="entry name" value="D_2_HYDROXYACID_DH_2"/>
    <property type="match status" value="1"/>
</dbReference>
<dbReference type="PROSITE" id="PS00671">
    <property type="entry name" value="D_2_HYDROXYACID_DH_3"/>
    <property type="match status" value="1"/>
</dbReference>
<accession>O29445</accession>
<organism>
    <name type="scientific">Archaeoglobus fulgidus (strain ATCC 49558 / DSM 4304 / JCM 9628 / NBRC 100126 / VC-16)</name>
    <dbReference type="NCBI Taxonomy" id="224325"/>
    <lineage>
        <taxon>Archaea</taxon>
        <taxon>Methanobacteriati</taxon>
        <taxon>Methanobacteriota</taxon>
        <taxon>Archaeoglobi</taxon>
        <taxon>Archaeoglobales</taxon>
        <taxon>Archaeoglobaceae</taxon>
        <taxon>Archaeoglobus</taxon>
    </lineage>
</organism>